<keyword id="KW-0520">NAD</keyword>
<keyword id="KW-0560">Oxidoreductase</keyword>
<keyword id="KW-0816">Tricarboxylic acid cycle</keyword>
<accession>Q46BQ2</accession>
<feature type="chain" id="PRO_0000241970" description="Malate dehydrogenase">
    <location>
        <begin position="1"/>
        <end position="307"/>
    </location>
</feature>
<feature type="active site" description="Proton acceptor" evidence="2">
    <location>
        <position position="174"/>
    </location>
</feature>
<feature type="binding site" evidence="1">
    <location>
        <begin position="8"/>
        <end position="13"/>
    </location>
    <ligand>
        <name>NAD(+)</name>
        <dbReference type="ChEBI" id="CHEBI:57540"/>
    </ligand>
</feature>
<feature type="binding site" evidence="1">
    <location>
        <position position="32"/>
    </location>
    <ligand>
        <name>NAD(+)</name>
        <dbReference type="ChEBI" id="CHEBI:57540"/>
    </ligand>
</feature>
<feature type="binding site" evidence="2">
    <location>
        <position position="81"/>
    </location>
    <ligand>
        <name>substrate</name>
    </ligand>
</feature>
<feature type="binding site" evidence="2">
    <location>
        <position position="87"/>
    </location>
    <ligand>
        <name>substrate</name>
    </ligand>
</feature>
<feature type="binding site" evidence="1">
    <location>
        <position position="94"/>
    </location>
    <ligand>
        <name>NAD(+)</name>
        <dbReference type="ChEBI" id="CHEBI:57540"/>
    </ligand>
</feature>
<feature type="binding site" evidence="1">
    <location>
        <begin position="117"/>
        <end position="119"/>
    </location>
    <ligand>
        <name>NAD(+)</name>
        <dbReference type="ChEBI" id="CHEBI:57540"/>
    </ligand>
</feature>
<feature type="binding site" evidence="2">
    <location>
        <position position="119"/>
    </location>
    <ligand>
        <name>substrate</name>
    </ligand>
</feature>
<feature type="binding site" evidence="2">
    <location>
        <position position="150"/>
    </location>
    <ligand>
        <name>substrate</name>
    </ligand>
</feature>
<sequence>MAKISVIGAGNVGATTVQRLAELELGEIVMTDIVEGLPQGKALDLIQAGAIKGYDTSIIGTNDYAEIVDSDLVIITAGIARKPGMTREDLIKTNSKIIAEVSRNIAKYAPDSIVINVTNPLDIITYIAMKSTGFETKKVFGMSGVLDSGRFASFIAEELKCSKKDVQAMVIGGHGDLMVPLPQYTTVSGVPLTDLLPGDRIARLVERTVNGGAEIVELLKQGSAFYAPSAAIVSMAEAVIKNSKRILPASAYLEGHYGQEGIYFGVPVKLGASGVEEILELKLDESQYETLRKSSETIRNTISQLEI</sequence>
<dbReference type="EC" id="1.1.1.37" evidence="1"/>
<dbReference type="EMBL" id="CP000099">
    <property type="protein sequence ID" value="AAZ70690.1"/>
    <property type="molecule type" value="Genomic_DNA"/>
</dbReference>
<dbReference type="SMR" id="Q46BQ2"/>
<dbReference type="STRING" id="269797.Mbar_A1748"/>
<dbReference type="PaxDb" id="269797-Mbar_A1748"/>
<dbReference type="KEGG" id="mba:Mbar_A1748"/>
<dbReference type="eggNOG" id="arCOG00246">
    <property type="taxonomic scope" value="Archaea"/>
</dbReference>
<dbReference type="HOGENOM" id="CLU_045401_2_1_2"/>
<dbReference type="OrthoDB" id="2596at2157"/>
<dbReference type="GO" id="GO:0004459">
    <property type="term" value="F:L-lactate dehydrogenase activity"/>
    <property type="evidence" value="ECO:0007669"/>
    <property type="project" value="TreeGrafter"/>
</dbReference>
<dbReference type="GO" id="GO:0030060">
    <property type="term" value="F:L-malate dehydrogenase (NAD+) activity"/>
    <property type="evidence" value="ECO:0007669"/>
    <property type="project" value="UniProtKB-EC"/>
</dbReference>
<dbReference type="GO" id="GO:0006089">
    <property type="term" value="P:lactate metabolic process"/>
    <property type="evidence" value="ECO:0007669"/>
    <property type="project" value="TreeGrafter"/>
</dbReference>
<dbReference type="GO" id="GO:0006099">
    <property type="term" value="P:tricarboxylic acid cycle"/>
    <property type="evidence" value="ECO:0007669"/>
    <property type="project" value="UniProtKB-KW"/>
</dbReference>
<dbReference type="CDD" id="cd01339">
    <property type="entry name" value="LDH-like_MDH"/>
    <property type="match status" value="1"/>
</dbReference>
<dbReference type="FunFam" id="3.40.50.720:FF:000018">
    <property type="entry name" value="Malate dehydrogenase"/>
    <property type="match status" value="1"/>
</dbReference>
<dbReference type="FunFam" id="3.90.110.10:FF:000004">
    <property type="entry name" value="Malate dehydrogenase"/>
    <property type="match status" value="1"/>
</dbReference>
<dbReference type="Gene3D" id="3.90.110.10">
    <property type="entry name" value="Lactate dehydrogenase/glycoside hydrolase, family 4, C-terminal"/>
    <property type="match status" value="1"/>
</dbReference>
<dbReference type="Gene3D" id="3.40.50.720">
    <property type="entry name" value="NAD(P)-binding Rossmann-like Domain"/>
    <property type="match status" value="1"/>
</dbReference>
<dbReference type="HAMAP" id="MF_00487">
    <property type="entry name" value="Malate_dehydrog_3"/>
    <property type="match status" value="1"/>
</dbReference>
<dbReference type="InterPro" id="IPR001557">
    <property type="entry name" value="L-lactate/malate_DH"/>
</dbReference>
<dbReference type="InterPro" id="IPR022383">
    <property type="entry name" value="Lactate/malate_DH_C"/>
</dbReference>
<dbReference type="InterPro" id="IPR001236">
    <property type="entry name" value="Lactate/malate_DH_N"/>
</dbReference>
<dbReference type="InterPro" id="IPR015955">
    <property type="entry name" value="Lactate_DH/Glyco_Ohase_4_C"/>
</dbReference>
<dbReference type="InterPro" id="IPR011275">
    <property type="entry name" value="Malate_DH_type3"/>
</dbReference>
<dbReference type="InterPro" id="IPR036291">
    <property type="entry name" value="NAD(P)-bd_dom_sf"/>
</dbReference>
<dbReference type="NCBIfam" id="TIGR01763">
    <property type="entry name" value="MalateDH_bact"/>
    <property type="match status" value="1"/>
</dbReference>
<dbReference type="NCBIfam" id="NF004863">
    <property type="entry name" value="PRK06223.1"/>
    <property type="match status" value="1"/>
</dbReference>
<dbReference type="PANTHER" id="PTHR43128">
    <property type="entry name" value="L-2-HYDROXYCARBOXYLATE DEHYDROGENASE (NAD(P)(+))"/>
    <property type="match status" value="1"/>
</dbReference>
<dbReference type="PANTHER" id="PTHR43128:SF16">
    <property type="entry name" value="L-LACTATE DEHYDROGENASE"/>
    <property type="match status" value="1"/>
</dbReference>
<dbReference type="Pfam" id="PF02866">
    <property type="entry name" value="Ldh_1_C"/>
    <property type="match status" value="1"/>
</dbReference>
<dbReference type="Pfam" id="PF00056">
    <property type="entry name" value="Ldh_1_N"/>
    <property type="match status" value="1"/>
</dbReference>
<dbReference type="PIRSF" id="PIRSF000102">
    <property type="entry name" value="Lac_mal_DH"/>
    <property type="match status" value="1"/>
</dbReference>
<dbReference type="PRINTS" id="PR00086">
    <property type="entry name" value="LLDHDRGNASE"/>
</dbReference>
<dbReference type="SUPFAM" id="SSF56327">
    <property type="entry name" value="LDH C-terminal domain-like"/>
    <property type="match status" value="1"/>
</dbReference>
<dbReference type="SUPFAM" id="SSF51735">
    <property type="entry name" value="NAD(P)-binding Rossmann-fold domains"/>
    <property type="match status" value="1"/>
</dbReference>
<evidence type="ECO:0000250" key="1">
    <source>
        <dbReference type="UniProtKB" id="O08349"/>
    </source>
</evidence>
<evidence type="ECO:0000250" key="2">
    <source>
        <dbReference type="UniProtKB" id="P61889"/>
    </source>
</evidence>
<evidence type="ECO:0000305" key="3"/>
<name>MDH_METBF</name>
<organism>
    <name type="scientific">Methanosarcina barkeri (strain Fusaro / DSM 804)</name>
    <dbReference type="NCBI Taxonomy" id="269797"/>
    <lineage>
        <taxon>Archaea</taxon>
        <taxon>Methanobacteriati</taxon>
        <taxon>Methanobacteriota</taxon>
        <taxon>Stenosarchaea group</taxon>
        <taxon>Methanomicrobia</taxon>
        <taxon>Methanosarcinales</taxon>
        <taxon>Methanosarcinaceae</taxon>
        <taxon>Methanosarcina</taxon>
    </lineage>
</organism>
<comment type="function">
    <text evidence="1">Catalyzes the reversible oxidation of malate to oxaloacetate.</text>
</comment>
<comment type="catalytic activity">
    <reaction evidence="1">
        <text>(S)-malate + NAD(+) = oxaloacetate + NADH + H(+)</text>
        <dbReference type="Rhea" id="RHEA:21432"/>
        <dbReference type="ChEBI" id="CHEBI:15378"/>
        <dbReference type="ChEBI" id="CHEBI:15589"/>
        <dbReference type="ChEBI" id="CHEBI:16452"/>
        <dbReference type="ChEBI" id="CHEBI:57540"/>
        <dbReference type="ChEBI" id="CHEBI:57945"/>
        <dbReference type="EC" id="1.1.1.37"/>
    </reaction>
</comment>
<comment type="similarity">
    <text evidence="3">Belongs to the LDH/MDH superfamily.</text>
</comment>
<protein>
    <recommendedName>
        <fullName evidence="1">Malate dehydrogenase</fullName>
        <ecNumber evidence="1">1.1.1.37</ecNumber>
    </recommendedName>
</protein>
<gene>
    <name type="primary">mdh</name>
    <name type="ordered locus">Mbar_A1748</name>
</gene>
<reference key="1">
    <citation type="journal article" date="2006" name="J. Bacteriol.">
        <title>The Methanosarcina barkeri genome: comparative analysis with Methanosarcina acetivorans and Methanosarcina mazei reveals extensive rearrangement within methanosarcinal genomes.</title>
        <authorList>
            <person name="Maeder D.L."/>
            <person name="Anderson I."/>
            <person name="Brettin T.S."/>
            <person name="Bruce D.C."/>
            <person name="Gilna P."/>
            <person name="Han C.S."/>
            <person name="Lapidus A."/>
            <person name="Metcalf W.W."/>
            <person name="Saunders E."/>
            <person name="Tapia R."/>
            <person name="Sowers K.R."/>
        </authorList>
    </citation>
    <scope>NUCLEOTIDE SEQUENCE [LARGE SCALE GENOMIC DNA]</scope>
    <source>
        <strain>Fusaro / DSM 804</strain>
    </source>
</reference>
<proteinExistence type="inferred from homology"/>